<proteinExistence type="inferred from homology"/>
<keyword id="KW-0012">Acyltransferase</keyword>
<keyword id="KW-0963">Cytoplasm</keyword>
<keyword id="KW-0275">Fatty acid biosynthesis</keyword>
<keyword id="KW-0276">Fatty acid metabolism</keyword>
<keyword id="KW-0444">Lipid biosynthesis</keyword>
<keyword id="KW-0443">Lipid metabolism</keyword>
<keyword id="KW-0511">Multifunctional enzyme</keyword>
<keyword id="KW-1185">Reference proteome</keyword>
<keyword id="KW-0808">Transferase</keyword>
<name>FABH_BURMA</name>
<protein>
    <recommendedName>
        <fullName evidence="1">Beta-ketoacyl-[acyl-carrier-protein] synthase III</fullName>
        <shortName evidence="1">Beta-ketoacyl-ACP synthase III</shortName>
        <shortName evidence="1">KAS III</shortName>
        <ecNumber evidence="1">2.3.1.180</ecNumber>
    </recommendedName>
    <alternativeName>
        <fullName evidence="1">3-oxoacyl-[acyl-carrier-protein] synthase 3</fullName>
    </alternativeName>
    <alternativeName>
        <fullName evidence="1">3-oxoacyl-[acyl-carrier-protein] synthase III</fullName>
    </alternativeName>
</protein>
<feature type="chain" id="PRO_1000070219" description="Beta-ketoacyl-[acyl-carrier-protein] synthase III">
    <location>
        <begin position="1"/>
        <end position="329"/>
    </location>
</feature>
<feature type="region of interest" description="ACP-binding" evidence="1">
    <location>
        <begin position="257"/>
        <end position="261"/>
    </location>
</feature>
<feature type="active site" evidence="1">
    <location>
        <position position="123"/>
    </location>
</feature>
<feature type="active site" evidence="1">
    <location>
        <position position="256"/>
    </location>
</feature>
<feature type="active site" evidence="1">
    <location>
        <position position="286"/>
    </location>
</feature>
<accession>Q62LU2</accession>
<organism>
    <name type="scientific">Burkholderia mallei (strain ATCC 23344)</name>
    <dbReference type="NCBI Taxonomy" id="243160"/>
    <lineage>
        <taxon>Bacteria</taxon>
        <taxon>Pseudomonadati</taxon>
        <taxon>Pseudomonadota</taxon>
        <taxon>Betaproteobacteria</taxon>
        <taxon>Burkholderiales</taxon>
        <taxon>Burkholderiaceae</taxon>
        <taxon>Burkholderia</taxon>
        <taxon>pseudomallei group</taxon>
    </lineage>
</organism>
<comment type="function">
    <text evidence="1">Catalyzes the condensation reaction of fatty acid synthesis by the addition to an acyl acceptor of two carbons from malonyl-ACP. Catalyzes the first condensation reaction which initiates fatty acid synthesis and may therefore play a role in governing the total rate of fatty acid production. Possesses both acetoacetyl-ACP synthase and acetyl transacylase activities. Its substrate specificity determines the biosynthesis of branched-chain and/or straight-chain of fatty acids.</text>
</comment>
<comment type="catalytic activity">
    <reaction evidence="1">
        <text>malonyl-[ACP] + acetyl-CoA + H(+) = 3-oxobutanoyl-[ACP] + CO2 + CoA</text>
        <dbReference type="Rhea" id="RHEA:12080"/>
        <dbReference type="Rhea" id="RHEA-COMP:9623"/>
        <dbReference type="Rhea" id="RHEA-COMP:9625"/>
        <dbReference type="ChEBI" id="CHEBI:15378"/>
        <dbReference type="ChEBI" id="CHEBI:16526"/>
        <dbReference type="ChEBI" id="CHEBI:57287"/>
        <dbReference type="ChEBI" id="CHEBI:57288"/>
        <dbReference type="ChEBI" id="CHEBI:78449"/>
        <dbReference type="ChEBI" id="CHEBI:78450"/>
        <dbReference type="EC" id="2.3.1.180"/>
    </reaction>
</comment>
<comment type="pathway">
    <text evidence="1">Lipid metabolism; fatty acid biosynthesis.</text>
</comment>
<comment type="subunit">
    <text evidence="1">Homodimer.</text>
</comment>
<comment type="subcellular location">
    <subcellularLocation>
        <location evidence="1">Cytoplasm</location>
    </subcellularLocation>
</comment>
<comment type="domain">
    <text evidence="1">The last Arg residue of the ACP-binding site is essential for the weak association between ACP/AcpP and FabH.</text>
</comment>
<comment type="similarity">
    <text evidence="1">Belongs to the thiolase-like superfamily. FabH family.</text>
</comment>
<reference key="1">
    <citation type="journal article" date="2004" name="Proc. Natl. Acad. Sci. U.S.A.">
        <title>Structural flexibility in the Burkholderia mallei genome.</title>
        <authorList>
            <person name="Nierman W.C."/>
            <person name="DeShazer D."/>
            <person name="Kim H.S."/>
            <person name="Tettelin H."/>
            <person name="Nelson K.E."/>
            <person name="Feldblyum T.V."/>
            <person name="Ulrich R.L."/>
            <person name="Ronning C.M."/>
            <person name="Brinkac L.M."/>
            <person name="Daugherty S.C."/>
            <person name="Davidsen T.D."/>
            <person name="DeBoy R.T."/>
            <person name="Dimitrov G."/>
            <person name="Dodson R.J."/>
            <person name="Durkin A.S."/>
            <person name="Gwinn M.L."/>
            <person name="Haft D.H."/>
            <person name="Khouri H.M."/>
            <person name="Kolonay J.F."/>
            <person name="Madupu R."/>
            <person name="Mohammoud Y."/>
            <person name="Nelson W.C."/>
            <person name="Radune D."/>
            <person name="Romero C.M."/>
            <person name="Sarria S."/>
            <person name="Selengut J."/>
            <person name="Shamblin C."/>
            <person name="Sullivan S.A."/>
            <person name="White O."/>
            <person name="Yu Y."/>
            <person name="Zafar N."/>
            <person name="Zhou L."/>
            <person name="Fraser C.M."/>
        </authorList>
    </citation>
    <scope>NUCLEOTIDE SEQUENCE [LARGE SCALE GENOMIC DNA]</scope>
    <source>
        <strain>ATCC 23344</strain>
    </source>
</reference>
<gene>
    <name evidence="1" type="primary">fabH</name>
    <name type="ordered locus">BMA0530</name>
</gene>
<sequence length="329" mass="34823">MAQSTLYSRVLGTGSYLPPDRVTNQELADRLAKDGIETSDEWIVARTGIRARHFAAPDVTTSDLALVAAQRAIEAADVDPQSIDLIIVATSTPDFVFPSTACLLQNKLGIKNGGAAFDVQAVCSGFAYALATADSFIRTGQHRTALVIGAEAFSRILDFKDRTTCVLFGDGAGAVVLSASEEPGILGSALHADGSYSNILCTPGNVNRGVIAGSAFLHMDGQAVFKLAVNVLEKVAVEALSKAELASEQVDWLIPHQANIRIMTSTCRKLGLPQERMIVTVDEHGNTSAASIPLALDVAVRDGRIKRGQHVLIEGVGGGFTWGASVFRF</sequence>
<dbReference type="EC" id="2.3.1.180" evidence="1"/>
<dbReference type="EMBL" id="CP000010">
    <property type="protein sequence ID" value="AAU49386.1"/>
    <property type="molecule type" value="Genomic_DNA"/>
</dbReference>
<dbReference type="RefSeq" id="WP_004191537.1">
    <property type="nucleotide sequence ID" value="NC_006348.1"/>
</dbReference>
<dbReference type="RefSeq" id="YP_102326.1">
    <property type="nucleotide sequence ID" value="NC_006348.1"/>
</dbReference>
<dbReference type="SMR" id="Q62LU2"/>
<dbReference type="KEGG" id="bma:BMA0530"/>
<dbReference type="PATRIC" id="fig|243160.12.peg.544"/>
<dbReference type="eggNOG" id="COG0332">
    <property type="taxonomic scope" value="Bacteria"/>
</dbReference>
<dbReference type="HOGENOM" id="CLU_039592_3_1_4"/>
<dbReference type="UniPathway" id="UPA00094"/>
<dbReference type="Proteomes" id="UP000006693">
    <property type="component" value="Chromosome 1"/>
</dbReference>
<dbReference type="GO" id="GO:0005737">
    <property type="term" value="C:cytoplasm"/>
    <property type="evidence" value="ECO:0007669"/>
    <property type="project" value="UniProtKB-SubCell"/>
</dbReference>
<dbReference type="GO" id="GO:0004315">
    <property type="term" value="F:3-oxoacyl-[acyl-carrier-protein] synthase activity"/>
    <property type="evidence" value="ECO:0007669"/>
    <property type="project" value="InterPro"/>
</dbReference>
<dbReference type="GO" id="GO:0033818">
    <property type="term" value="F:beta-ketoacyl-acyl-carrier-protein synthase III activity"/>
    <property type="evidence" value="ECO:0007669"/>
    <property type="project" value="UniProtKB-UniRule"/>
</dbReference>
<dbReference type="GO" id="GO:0006633">
    <property type="term" value="P:fatty acid biosynthetic process"/>
    <property type="evidence" value="ECO:0007669"/>
    <property type="project" value="UniProtKB-UniRule"/>
</dbReference>
<dbReference type="CDD" id="cd00830">
    <property type="entry name" value="KAS_III"/>
    <property type="match status" value="1"/>
</dbReference>
<dbReference type="FunFam" id="3.40.47.10:FF:000004">
    <property type="entry name" value="3-oxoacyl-[acyl-carrier-protein] synthase 3"/>
    <property type="match status" value="1"/>
</dbReference>
<dbReference type="Gene3D" id="3.40.47.10">
    <property type="match status" value="1"/>
</dbReference>
<dbReference type="HAMAP" id="MF_01815">
    <property type="entry name" value="FabH"/>
    <property type="match status" value="1"/>
</dbReference>
<dbReference type="InterPro" id="IPR013747">
    <property type="entry name" value="ACP_syn_III_C"/>
</dbReference>
<dbReference type="InterPro" id="IPR013751">
    <property type="entry name" value="ACP_syn_III_N"/>
</dbReference>
<dbReference type="InterPro" id="IPR004655">
    <property type="entry name" value="FabH"/>
</dbReference>
<dbReference type="InterPro" id="IPR016039">
    <property type="entry name" value="Thiolase-like"/>
</dbReference>
<dbReference type="NCBIfam" id="TIGR00747">
    <property type="entry name" value="fabH"/>
    <property type="match status" value="1"/>
</dbReference>
<dbReference type="NCBIfam" id="NF006829">
    <property type="entry name" value="PRK09352.1"/>
    <property type="match status" value="1"/>
</dbReference>
<dbReference type="PANTHER" id="PTHR43091">
    <property type="entry name" value="3-OXOACYL-[ACYL-CARRIER-PROTEIN] SYNTHASE"/>
    <property type="match status" value="1"/>
</dbReference>
<dbReference type="PANTHER" id="PTHR43091:SF1">
    <property type="entry name" value="BETA-KETOACYL-[ACYL-CARRIER-PROTEIN] SYNTHASE III, CHLOROPLASTIC"/>
    <property type="match status" value="1"/>
</dbReference>
<dbReference type="Pfam" id="PF08545">
    <property type="entry name" value="ACP_syn_III"/>
    <property type="match status" value="1"/>
</dbReference>
<dbReference type="Pfam" id="PF08541">
    <property type="entry name" value="ACP_syn_III_C"/>
    <property type="match status" value="1"/>
</dbReference>
<dbReference type="SUPFAM" id="SSF53901">
    <property type="entry name" value="Thiolase-like"/>
    <property type="match status" value="1"/>
</dbReference>
<evidence type="ECO:0000255" key="1">
    <source>
        <dbReference type="HAMAP-Rule" id="MF_01815"/>
    </source>
</evidence>